<reference key="1">
    <citation type="journal article" date="2003" name="Genome Res.">
        <title>Genome sequence of an M3 strain of Streptococcus pyogenes reveals a large-scale genomic rearrangement in invasive strains and new insights into phage evolution.</title>
        <authorList>
            <person name="Nakagawa I."/>
            <person name="Kurokawa K."/>
            <person name="Yamashita A."/>
            <person name="Nakata M."/>
            <person name="Tomiyasu Y."/>
            <person name="Okahashi N."/>
            <person name="Kawabata S."/>
            <person name="Yamazaki K."/>
            <person name="Shiba T."/>
            <person name="Yasunaga T."/>
            <person name="Hayashi H."/>
            <person name="Hattori M."/>
            <person name="Hamada S."/>
        </authorList>
    </citation>
    <scope>NUCLEOTIDE SEQUENCE [LARGE SCALE GENOMIC DNA]</scope>
    <source>
        <strain>SSI-1</strain>
    </source>
</reference>
<feature type="chain" id="PRO_0000411371" description="Heat-inducible transcription repressor hrcA">
    <location>
        <begin position="1"/>
        <end position="344"/>
    </location>
</feature>
<organism>
    <name type="scientific">Streptococcus pyogenes serotype M3 (strain SSI-1)</name>
    <dbReference type="NCBI Taxonomy" id="193567"/>
    <lineage>
        <taxon>Bacteria</taxon>
        <taxon>Bacillati</taxon>
        <taxon>Bacillota</taxon>
        <taxon>Bacilli</taxon>
        <taxon>Lactobacillales</taxon>
        <taxon>Streptococcaceae</taxon>
        <taxon>Streptococcus</taxon>
    </lineage>
</organism>
<sequence length="344" mass="39013">MITQRQNDILNLIVELFTQTHEPVGSKALQRTIDSSSATIRNDMAKLEKLGLLEKAHTSSGRMPSPAGFKYFVEHSLRLDSIDEQDIYHVIKAFDFEAFKLEDMLQKASHILSEMTGYTSVILDVEPARQRLTGFDVVQLSNHDALAVMTLDESKPVTVQFAIPRNFLTRDLIAFKAIVEERLLDSSVIDIHYKLRTEIPQIVQKYFVTTDNVLQLFDYVFSELFLETVFVAGKVNSLTYSDLSTYQFLDNEQQVAISLRQSLKEGEMASVQVADSQEAALADVSVLTHKFLIPYRGFGLLSLIGPIDMDYRRSVSLVNIIGKVLAAKLGDYYRYLNSNHYEVH</sequence>
<name>HRCA_STRPQ</name>
<accession>P0DB67</accession>
<accession>Q8K623</accession>
<gene>
    <name evidence="1" type="primary">hrcA</name>
    <name type="ordered locus">SPs0333</name>
</gene>
<evidence type="ECO:0000255" key="1">
    <source>
        <dbReference type="HAMAP-Rule" id="MF_00081"/>
    </source>
</evidence>
<evidence type="ECO:0000305" key="2"/>
<protein>
    <recommendedName>
        <fullName>Heat-inducible transcription repressor hrcA</fullName>
    </recommendedName>
</protein>
<proteinExistence type="inferred from homology"/>
<keyword id="KW-0678">Repressor</keyword>
<keyword id="KW-0346">Stress response</keyword>
<keyword id="KW-0804">Transcription</keyword>
<keyword id="KW-0805">Transcription regulation</keyword>
<comment type="function">
    <text evidence="1">Negative regulator of class I heat shock genes (grpE-dnaK-dnaJ and groELS operons). Prevents heat-shock induction of these operons.</text>
</comment>
<comment type="similarity">
    <text evidence="1">Belongs to the HrcA family.</text>
</comment>
<comment type="sequence caution" evidence="2">
    <conflict type="erroneous initiation">
        <sequence resource="EMBL-CDS" id="BAC63428"/>
    </conflict>
</comment>
<dbReference type="EMBL" id="BA000034">
    <property type="protein sequence ID" value="BAC63428.1"/>
    <property type="status" value="ALT_INIT"/>
    <property type="molecule type" value="Genomic_DNA"/>
</dbReference>
<dbReference type="RefSeq" id="WP_011054942.1">
    <property type="nucleotide sequence ID" value="NC_004606.1"/>
</dbReference>
<dbReference type="SMR" id="P0DB67"/>
<dbReference type="KEGG" id="sps:SPs0333"/>
<dbReference type="HOGENOM" id="CLU_050019_1_0_9"/>
<dbReference type="GO" id="GO:0003677">
    <property type="term" value="F:DNA binding"/>
    <property type="evidence" value="ECO:0007669"/>
    <property type="project" value="InterPro"/>
</dbReference>
<dbReference type="GO" id="GO:0045892">
    <property type="term" value="P:negative regulation of DNA-templated transcription"/>
    <property type="evidence" value="ECO:0007669"/>
    <property type="project" value="UniProtKB-UniRule"/>
</dbReference>
<dbReference type="Gene3D" id="3.30.450.40">
    <property type="match status" value="1"/>
</dbReference>
<dbReference type="Gene3D" id="3.30.390.60">
    <property type="entry name" value="Heat-inducible transcription repressor hrca homolog, domain 3"/>
    <property type="match status" value="1"/>
</dbReference>
<dbReference type="Gene3D" id="1.10.10.10">
    <property type="entry name" value="Winged helix-like DNA-binding domain superfamily/Winged helix DNA-binding domain"/>
    <property type="match status" value="1"/>
</dbReference>
<dbReference type="HAMAP" id="MF_00081">
    <property type="entry name" value="HrcA"/>
    <property type="match status" value="1"/>
</dbReference>
<dbReference type="InterPro" id="IPR029016">
    <property type="entry name" value="GAF-like_dom_sf"/>
</dbReference>
<dbReference type="InterPro" id="IPR002571">
    <property type="entry name" value="HrcA"/>
</dbReference>
<dbReference type="InterPro" id="IPR021153">
    <property type="entry name" value="HrcA_C"/>
</dbReference>
<dbReference type="InterPro" id="IPR036388">
    <property type="entry name" value="WH-like_DNA-bd_sf"/>
</dbReference>
<dbReference type="InterPro" id="IPR036390">
    <property type="entry name" value="WH_DNA-bd_sf"/>
</dbReference>
<dbReference type="InterPro" id="IPR005104">
    <property type="entry name" value="WHTH_HrcA_DNA-bd"/>
</dbReference>
<dbReference type="InterPro" id="IPR023120">
    <property type="entry name" value="WHTH_transcript_rep_HrcA_IDD"/>
</dbReference>
<dbReference type="NCBIfam" id="TIGR00331">
    <property type="entry name" value="hrcA"/>
    <property type="match status" value="1"/>
</dbReference>
<dbReference type="PANTHER" id="PTHR34824">
    <property type="entry name" value="HEAT-INDUCIBLE TRANSCRIPTION REPRESSOR HRCA"/>
    <property type="match status" value="1"/>
</dbReference>
<dbReference type="PANTHER" id="PTHR34824:SF1">
    <property type="entry name" value="HEAT-INDUCIBLE TRANSCRIPTION REPRESSOR HRCA"/>
    <property type="match status" value="1"/>
</dbReference>
<dbReference type="Pfam" id="PF01628">
    <property type="entry name" value="HrcA"/>
    <property type="match status" value="1"/>
</dbReference>
<dbReference type="Pfam" id="PF03444">
    <property type="entry name" value="HrcA_DNA-bdg"/>
    <property type="match status" value="1"/>
</dbReference>
<dbReference type="PIRSF" id="PIRSF005485">
    <property type="entry name" value="HrcA"/>
    <property type="match status" value="1"/>
</dbReference>
<dbReference type="SUPFAM" id="SSF55781">
    <property type="entry name" value="GAF domain-like"/>
    <property type="match status" value="1"/>
</dbReference>
<dbReference type="SUPFAM" id="SSF46785">
    <property type="entry name" value="Winged helix' DNA-binding domain"/>
    <property type="match status" value="1"/>
</dbReference>